<feature type="chain" id="PRO_0000329434" description="Leucine-rich repeat-containing protein 66">
    <location>
        <begin position="1"/>
        <end position="872"/>
    </location>
</feature>
<feature type="transmembrane region" description="Helical" evidence="2">
    <location>
        <begin position="4"/>
        <end position="24"/>
    </location>
</feature>
<feature type="transmembrane region" description="Helical" evidence="2">
    <location>
        <begin position="371"/>
        <end position="391"/>
    </location>
</feature>
<feature type="repeat" description="LRR 1">
    <location>
        <begin position="142"/>
        <end position="164"/>
    </location>
</feature>
<feature type="repeat" description="LRR 2">
    <location>
        <begin position="165"/>
        <end position="186"/>
    </location>
</feature>
<feature type="repeat" description="LRR 3">
    <location>
        <begin position="189"/>
        <end position="210"/>
    </location>
</feature>
<feature type="repeat" description="LRR 4">
    <location>
        <begin position="213"/>
        <end position="234"/>
    </location>
</feature>
<feature type="repeat" description="LRR 5">
    <location>
        <begin position="239"/>
        <end position="259"/>
    </location>
</feature>
<feature type="region of interest" description="Disordered" evidence="3">
    <location>
        <begin position="339"/>
        <end position="363"/>
    </location>
</feature>
<feature type="region of interest" description="Disordered" evidence="3">
    <location>
        <begin position="467"/>
        <end position="501"/>
    </location>
</feature>
<feature type="region of interest" description="Disordered" evidence="3">
    <location>
        <begin position="560"/>
        <end position="579"/>
    </location>
</feature>
<feature type="region of interest" description="Disordered" evidence="3">
    <location>
        <begin position="695"/>
        <end position="761"/>
    </location>
</feature>
<feature type="region of interest" description="Disordered" evidence="3">
    <location>
        <begin position="776"/>
        <end position="872"/>
    </location>
</feature>
<feature type="compositionally biased region" description="Basic and acidic residues" evidence="3">
    <location>
        <begin position="349"/>
        <end position="363"/>
    </location>
</feature>
<feature type="compositionally biased region" description="Polar residues" evidence="3">
    <location>
        <begin position="467"/>
        <end position="483"/>
    </location>
</feature>
<feature type="compositionally biased region" description="Basic and acidic residues" evidence="3">
    <location>
        <begin position="484"/>
        <end position="493"/>
    </location>
</feature>
<feature type="compositionally biased region" description="Polar residues" evidence="3">
    <location>
        <begin position="725"/>
        <end position="736"/>
    </location>
</feature>
<feature type="compositionally biased region" description="Polar residues" evidence="3">
    <location>
        <begin position="746"/>
        <end position="760"/>
    </location>
</feature>
<feature type="compositionally biased region" description="Polar residues" evidence="3">
    <location>
        <begin position="785"/>
        <end position="805"/>
    </location>
</feature>
<feature type="compositionally biased region" description="Basic and acidic residues" evidence="3">
    <location>
        <begin position="831"/>
        <end position="841"/>
    </location>
</feature>
<feature type="modified residue" description="Phosphoserine" evidence="1">
    <location>
        <position position="718"/>
    </location>
</feature>
<feature type="modified residue" description="Phosphoserine" evidence="5">
    <location>
        <position position="752"/>
    </location>
</feature>
<feature type="glycosylation site" description="N-linked (GlcNAc...) asparagine" evidence="2">
    <location>
        <position position="45"/>
    </location>
</feature>
<feature type="glycosylation site" description="N-linked (GlcNAc...) asparagine" evidence="2">
    <location>
        <position position="108"/>
    </location>
</feature>
<feature type="glycosylation site" description="N-linked (GlcNAc...) asparagine" evidence="2">
    <location>
        <position position="472"/>
    </location>
</feature>
<protein>
    <recommendedName>
        <fullName>Leucine-rich repeat-containing protein 66</fullName>
    </recommendedName>
</protein>
<comment type="subcellular location">
    <subcellularLocation>
        <location evidence="4">Membrane</location>
        <topology evidence="4">Multi-pass membrane protein</topology>
    </subcellularLocation>
</comment>
<gene>
    <name type="primary">Lrrc66</name>
</gene>
<keyword id="KW-0325">Glycoprotein</keyword>
<keyword id="KW-0433">Leucine-rich repeat</keyword>
<keyword id="KW-0472">Membrane</keyword>
<keyword id="KW-0597">Phosphoprotein</keyword>
<keyword id="KW-1185">Reference proteome</keyword>
<keyword id="KW-0677">Repeat</keyword>
<keyword id="KW-0812">Transmembrane</keyword>
<keyword id="KW-1133">Transmembrane helix</keyword>
<proteinExistence type="evidence at protein level"/>
<name>LRC66_MOUSE</name>
<reference key="1">
    <citation type="journal article" date="2005" name="Science">
        <title>The transcriptional landscape of the mammalian genome.</title>
        <authorList>
            <person name="Carninci P."/>
            <person name="Kasukawa T."/>
            <person name="Katayama S."/>
            <person name="Gough J."/>
            <person name="Frith M.C."/>
            <person name="Maeda N."/>
            <person name="Oyama R."/>
            <person name="Ravasi T."/>
            <person name="Lenhard B."/>
            <person name="Wells C."/>
            <person name="Kodzius R."/>
            <person name="Shimokawa K."/>
            <person name="Bajic V.B."/>
            <person name="Brenner S.E."/>
            <person name="Batalov S."/>
            <person name="Forrest A.R."/>
            <person name="Zavolan M."/>
            <person name="Davis M.J."/>
            <person name="Wilming L.G."/>
            <person name="Aidinis V."/>
            <person name="Allen J.E."/>
            <person name="Ambesi-Impiombato A."/>
            <person name="Apweiler R."/>
            <person name="Aturaliya R.N."/>
            <person name="Bailey T.L."/>
            <person name="Bansal M."/>
            <person name="Baxter L."/>
            <person name="Beisel K.W."/>
            <person name="Bersano T."/>
            <person name="Bono H."/>
            <person name="Chalk A.M."/>
            <person name="Chiu K.P."/>
            <person name="Choudhary V."/>
            <person name="Christoffels A."/>
            <person name="Clutterbuck D.R."/>
            <person name="Crowe M.L."/>
            <person name="Dalla E."/>
            <person name="Dalrymple B.P."/>
            <person name="de Bono B."/>
            <person name="Della Gatta G."/>
            <person name="di Bernardo D."/>
            <person name="Down T."/>
            <person name="Engstrom P."/>
            <person name="Fagiolini M."/>
            <person name="Faulkner G."/>
            <person name="Fletcher C.F."/>
            <person name="Fukushima T."/>
            <person name="Furuno M."/>
            <person name="Futaki S."/>
            <person name="Gariboldi M."/>
            <person name="Georgii-Hemming P."/>
            <person name="Gingeras T.R."/>
            <person name="Gojobori T."/>
            <person name="Green R.E."/>
            <person name="Gustincich S."/>
            <person name="Harbers M."/>
            <person name="Hayashi Y."/>
            <person name="Hensch T.K."/>
            <person name="Hirokawa N."/>
            <person name="Hill D."/>
            <person name="Huminiecki L."/>
            <person name="Iacono M."/>
            <person name="Ikeo K."/>
            <person name="Iwama A."/>
            <person name="Ishikawa T."/>
            <person name="Jakt M."/>
            <person name="Kanapin A."/>
            <person name="Katoh M."/>
            <person name="Kawasawa Y."/>
            <person name="Kelso J."/>
            <person name="Kitamura H."/>
            <person name="Kitano H."/>
            <person name="Kollias G."/>
            <person name="Krishnan S.P."/>
            <person name="Kruger A."/>
            <person name="Kummerfeld S.K."/>
            <person name="Kurochkin I.V."/>
            <person name="Lareau L.F."/>
            <person name="Lazarevic D."/>
            <person name="Lipovich L."/>
            <person name="Liu J."/>
            <person name="Liuni S."/>
            <person name="McWilliam S."/>
            <person name="Madan Babu M."/>
            <person name="Madera M."/>
            <person name="Marchionni L."/>
            <person name="Matsuda H."/>
            <person name="Matsuzawa S."/>
            <person name="Miki H."/>
            <person name="Mignone F."/>
            <person name="Miyake S."/>
            <person name="Morris K."/>
            <person name="Mottagui-Tabar S."/>
            <person name="Mulder N."/>
            <person name="Nakano N."/>
            <person name="Nakauchi H."/>
            <person name="Ng P."/>
            <person name="Nilsson R."/>
            <person name="Nishiguchi S."/>
            <person name="Nishikawa S."/>
            <person name="Nori F."/>
            <person name="Ohara O."/>
            <person name="Okazaki Y."/>
            <person name="Orlando V."/>
            <person name="Pang K.C."/>
            <person name="Pavan W.J."/>
            <person name="Pavesi G."/>
            <person name="Pesole G."/>
            <person name="Petrovsky N."/>
            <person name="Piazza S."/>
            <person name="Reed J."/>
            <person name="Reid J.F."/>
            <person name="Ring B.Z."/>
            <person name="Ringwald M."/>
            <person name="Rost B."/>
            <person name="Ruan Y."/>
            <person name="Salzberg S.L."/>
            <person name="Sandelin A."/>
            <person name="Schneider C."/>
            <person name="Schoenbach C."/>
            <person name="Sekiguchi K."/>
            <person name="Semple C.A."/>
            <person name="Seno S."/>
            <person name="Sessa L."/>
            <person name="Sheng Y."/>
            <person name="Shibata Y."/>
            <person name="Shimada H."/>
            <person name="Shimada K."/>
            <person name="Silva D."/>
            <person name="Sinclair B."/>
            <person name="Sperling S."/>
            <person name="Stupka E."/>
            <person name="Sugiura K."/>
            <person name="Sultana R."/>
            <person name="Takenaka Y."/>
            <person name="Taki K."/>
            <person name="Tammoja K."/>
            <person name="Tan S.L."/>
            <person name="Tang S."/>
            <person name="Taylor M.S."/>
            <person name="Tegner J."/>
            <person name="Teichmann S.A."/>
            <person name="Ueda H.R."/>
            <person name="van Nimwegen E."/>
            <person name="Verardo R."/>
            <person name="Wei C.L."/>
            <person name="Yagi K."/>
            <person name="Yamanishi H."/>
            <person name="Zabarovsky E."/>
            <person name="Zhu S."/>
            <person name="Zimmer A."/>
            <person name="Hide W."/>
            <person name="Bult C."/>
            <person name="Grimmond S.M."/>
            <person name="Teasdale R.D."/>
            <person name="Liu E.T."/>
            <person name="Brusic V."/>
            <person name="Quackenbush J."/>
            <person name="Wahlestedt C."/>
            <person name="Mattick J.S."/>
            <person name="Hume D.A."/>
            <person name="Kai C."/>
            <person name="Sasaki D."/>
            <person name="Tomaru Y."/>
            <person name="Fukuda S."/>
            <person name="Kanamori-Katayama M."/>
            <person name="Suzuki M."/>
            <person name="Aoki J."/>
            <person name="Arakawa T."/>
            <person name="Iida J."/>
            <person name="Imamura K."/>
            <person name="Itoh M."/>
            <person name="Kato T."/>
            <person name="Kawaji H."/>
            <person name="Kawagashira N."/>
            <person name="Kawashima T."/>
            <person name="Kojima M."/>
            <person name="Kondo S."/>
            <person name="Konno H."/>
            <person name="Nakano K."/>
            <person name="Ninomiya N."/>
            <person name="Nishio T."/>
            <person name="Okada M."/>
            <person name="Plessy C."/>
            <person name="Shibata K."/>
            <person name="Shiraki T."/>
            <person name="Suzuki S."/>
            <person name="Tagami M."/>
            <person name="Waki K."/>
            <person name="Watahiki A."/>
            <person name="Okamura-Oho Y."/>
            <person name="Suzuki H."/>
            <person name="Kawai J."/>
            <person name="Hayashizaki Y."/>
        </authorList>
    </citation>
    <scope>NUCLEOTIDE SEQUENCE [LARGE SCALE MRNA]</scope>
    <source>
        <strain>C57BL/6J</strain>
        <tissue>Eye</tissue>
    </source>
</reference>
<reference key="2">
    <citation type="journal article" date="2004" name="Genome Res.">
        <title>The status, quality, and expansion of the NIH full-length cDNA project: the Mammalian Gene Collection (MGC).</title>
        <authorList>
            <consortium name="The MGC Project Team"/>
        </authorList>
    </citation>
    <scope>NUCLEOTIDE SEQUENCE [LARGE SCALE MRNA]</scope>
    <source>
        <tissue>Eye</tissue>
    </source>
</reference>
<reference key="3">
    <citation type="journal article" date="2010" name="Cell">
        <title>A tissue-specific atlas of mouse protein phosphorylation and expression.</title>
        <authorList>
            <person name="Huttlin E.L."/>
            <person name="Jedrychowski M.P."/>
            <person name="Elias J.E."/>
            <person name="Goswami T."/>
            <person name="Rad R."/>
            <person name="Beausoleil S.A."/>
            <person name="Villen J."/>
            <person name="Haas W."/>
            <person name="Sowa M.E."/>
            <person name="Gygi S.P."/>
        </authorList>
    </citation>
    <scope>PHOSPHORYLATION [LARGE SCALE ANALYSIS] AT SER-752</scope>
    <scope>IDENTIFICATION BY MASS SPECTROMETRY [LARGE SCALE ANALYSIS]</scope>
    <source>
        <tissue>Kidney</tissue>
    </source>
</reference>
<sequence>MRDFYVRVTILVTGLCFVETVTTPSRKSSVSFNPEYQRNGDLLVNWSSIRHVSQNTDAMDRSFYFFRVLFQPHTQKERHIKPPDRTHHRISKVTLDPLAHLHALEILNLSNKAIHYFSLDQPLPPSSHQKRHGGHSHSRLPRLQVLILQRNQLSGTPKGLWKLKSLRSLDLSFNRIVHIGLSDFHGCLQLESIYLKSNKICTIHPKAFKGLKKLQVVDLRSNALTTLVPIVTIALELPHLELGLADNQWQCSESNVNFQNITSSSWREIWKAICNMSVENKRPNAETHQIRKSRDTHLLLSPPSDLKSLIQSKAERPQAGMDMHLSALGKEAKDGYGDLRGMWPQSPVELRDSQDEQVTDRKDDKPPALELAICLSVFITFVVAFCLGAFARPYIDRLRQQRCSNKRPGSDNAYSNKGFHGDIEGAQHMEYQGTDLHQTTHHLHLSENQNPSWVAEPIPHSAVQSEQMLGSNGTDPGHQQSPEQLKDSNESRSGDSIVLPSGPVAHLALHGLPNADAHKAISPVQHHHDFLEEAHYDTVAQEYSLIDDVMDRSSITGPLGTFPSSVESRRDDLHPSQPRDVVASFSKTLAHANTREAEGSMETGCPEPLGAMDSQMGSSEERQVSNSIRELATQQPSFQGVDAEERLSHVYSEVLHNDPPSLRPRWGSGHYVIPATGEPVERDAPFDPHYDLVTNYESDSDEGSLFTLSSEGSEDTRSLAEEQASVENDGTSQPLPSRNLGEYKDSVTSAESVEDLTSQRIPEKCEAQEAHLRNTLISGPDSCVCETNQENDSSSLDPENRSTWPQLPGHKLSHHETLGTYGDIEPQSEAVDWHYSLRDLESPNVDSSPSPPYSDEDLSGPEDRARKRSKHW</sequence>
<dbReference type="EMBL" id="AK051875">
    <property type="protein sequence ID" value="BAC34797.1"/>
    <property type="molecule type" value="mRNA"/>
</dbReference>
<dbReference type="EMBL" id="BC031901">
    <property type="protein sequence ID" value="AAH31901.1"/>
    <property type="molecule type" value="mRNA"/>
</dbReference>
<dbReference type="CCDS" id="CCDS19343.1"/>
<dbReference type="RefSeq" id="NP_705796.1">
    <property type="nucleotide sequence ID" value="NM_153568.2"/>
</dbReference>
<dbReference type="RefSeq" id="XP_006504015.1">
    <property type="nucleotide sequence ID" value="XM_006503952.5"/>
</dbReference>
<dbReference type="STRING" id="10090.ENSMUSP00000084423"/>
<dbReference type="GlyCosmos" id="Q8K0B3">
    <property type="glycosylation" value="3 sites, No reported glycans"/>
</dbReference>
<dbReference type="GlyGen" id="Q8K0B3">
    <property type="glycosylation" value="3 sites"/>
</dbReference>
<dbReference type="iPTMnet" id="Q8K0B3"/>
<dbReference type="PhosphoSitePlus" id="Q8K0B3"/>
<dbReference type="PaxDb" id="10090-ENSMUSP00000084423"/>
<dbReference type="ProteomicsDB" id="292358"/>
<dbReference type="Antibodypedia" id="3070">
    <property type="antibodies" value="54 antibodies from 14 providers"/>
</dbReference>
<dbReference type="DNASU" id="231296"/>
<dbReference type="Ensembl" id="ENSMUST00000087177.4">
    <property type="protein sequence ID" value="ENSMUSP00000084423.3"/>
    <property type="gene ID" value="ENSMUSG00000067206.4"/>
</dbReference>
<dbReference type="GeneID" id="231296"/>
<dbReference type="KEGG" id="mmu:231296"/>
<dbReference type="UCSC" id="uc008xta.1">
    <property type="organism name" value="mouse"/>
</dbReference>
<dbReference type="AGR" id="MGI:2387634"/>
<dbReference type="CTD" id="339977"/>
<dbReference type="MGI" id="MGI:2387634">
    <property type="gene designation" value="Lrrc66"/>
</dbReference>
<dbReference type="VEuPathDB" id="HostDB:ENSMUSG00000067206"/>
<dbReference type="eggNOG" id="KOG0619">
    <property type="taxonomic scope" value="Eukaryota"/>
</dbReference>
<dbReference type="GeneTree" id="ENSGT00390000014817"/>
<dbReference type="HOGENOM" id="CLU_016612_0_0_1"/>
<dbReference type="InParanoid" id="Q8K0B3"/>
<dbReference type="OMA" id="LWDSQME"/>
<dbReference type="OrthoDB" id="660555at2759"/>
<dbReference type="PhylomeDB" id="Q8K0B3"/>
<dbReference type="TreeFam" id="TF332577"/>
<dbReference type="BioGRID-ORCS" id="231296">
    <property type="hits" value="2 hits in 78 CRISPR screens"/>
</dbReference>
<dbReference type="PRO" id="PR:Q8K0B3"/>
<dbReference type="Proteomes" id="UP000000589">
    <property type="component" value="Chromosome 5"/>
</dbReference>
<dbReference type="RNAct" id="Q8K0B3">
    <property type="molecule type" value="protein"/>
</dbReference>
<dbReference type="Bgee" id="ENSMUSG00000067206">
    <property type="expression patterns" value="Expressed in paneth cell and 30 other cell types or tissues"/>
</dbReference>
<dbReference type="ExpressionAtlas" id="Q8K0B3">
    <property type="expression patterns" value="baseline and differential"/>
</dbReference>
<dbReference type="GO" id="GO:0016020">
    <property type="term" value="C:membrane"/>
    <property type="evidence" value="ECO:0007669"/>
    <property type="project" value="UniProtKB-SubCell"/>
</dbReference>
<dbReference type="Gene3D" id="3.80.10.10">
    <property type="entry name" value="Ribonuclease Inhibitor"/>
    <property type="match status" value="1"/>
</dbReference>
<dbReference type="InterPro" id="IPR001611">
    <property type="entry name" value="Leu-rich_rpt"/>
</dbReference>
<dbReference type="InterPro" id="IPR003591">
    <property type="entry name" value="Leu-rich_rpt_typical-subtyp"/>
</dbReference>
<dbReference type="InterPro" id="IPR032675">
    <property type="entry name" value="LRR_dom_sf"/>
</dbReference>
<dbReference type="InterPro" id="IPR050541">
    <property type="entry name" value="LRR_TM_domain-containing"/>
</dbReference>
<dbReference type="PANTHER" id="PTHR24369">
    <property type="entry name" value="ANTIGEN BSP, PUTATIVE-RELATED"/>
    <property type="match status" value="1"/>
</dbReference>
<dbReference type="PANTHER" id="PTHR24369:SF213">
    <property type="entry name" value="INSULIN LIKE GROWTH FACTOR BINDING PROTEIN ACID LABILE SUBUNIT"/>
    <property type="match status" value="1"/>
</dbReference>
<dbReference type="Pfam" id="PF13855">
    <property type="entry name" value="LRR_8"/>
    <property type="match status" value="1"/>
</dbReference>
<dbReference type="SMART" id="SM00369">
    <property type="entry name" value="LRR_TYP"/>
    <property type="match status" value="4"/>
</dbReference>
<dbReference type="SUPFAM" id="SSF52058">
    <property type="entry name" value="L domain-like"/>
    <property type="match status" value="1"/>
</dbReference>
<dbReference type="PROSITE" id="PS51450">
    <property type="entry name" value="LRR"/>
    <property type="match status" value="5"/>
</dbReference>
<organism>
    <name type="scientific">Mus musculus</name>
    <name type="common">Mouse</name>
    <dbReference type="NCBI Taxonomy" id="10090"/>
    <lineage>
        <taxon>Eukaryota</taxon>
        <taxon>Metazoa</taxon>
        <taxon>Chordata</taxon>
        <taxon>Craniata</taxon>
        <taxon>Vertebrata</taxon>
        <taxon>Euteleostomi</taxon>
        <taxon>Mammalia</taxon>
        <taxon>Eutheria</taxon>
        <taxon>Euarchontoglires</taxon>
        <taxon>Glires</taxon>
        <taxon>Rodentia</taxon>
        <taxon>Myomorpha</taxon>
        <taxon>Muroidea</taxon>
        <taxon>Muridae</taxon>
        <taxon>Murinae</taxon>
        <taxon>Mus</taxon>
        <taxon>Mus</taxon>
    </lineage>
</organism>
<accession>Q8K0B3</accession>
<evidence type="ECO:0000250" key="1">
    <source>
        <dbReference type="UniProtKB" id="Q6TXF5"/>
    </source>
</evidence>
<evidence type="ECO:0000255" key="2"/>
<evidence type="ECO:0000256" key="3">
    <source>
        <dbReference type="SAM" id="MobiDB-lite"/>
    </source>
</evidence>
<evidence type="ECO:0000305" key="4"/>
<evidence type="ECO:0007744" key="5">
    <source>
    </source>
</evidence>